<dbReference type="EC" id="2.7.1.220" evidence="2"/>
<dbReference type="EMBL" id="CP000930">
    <property type="protein sequence ID" value="ABZ85202.1"/>
    <property type="molecule type" value="Genomic_DNA"/>
</dbReference>
<dbReference type="RefSeq" id="WP_012283687.1">
    <property type="nucleotide sequence ID" value="NC_010337.2"/>
</dbReference>
<dbReference type="SMR" id="B0TBI9"/>
<dbReference type="STRING" id="498761.HM1_2673"/>
<dbReference type="KEGG" id="hmo:HM1_2673"/>
<dbReference type="eggNOG" id="COG3395">
    <property type="taxonomic scope" value="Bacteria"/>
</dbReference>
<dbReference type="HOGENOM" id="CLU_029424_0_1_9"/>
<dbReference type="OrthoDB" id="9778478at2"/>
<dbReference type="BioCyc" id="MetaCyc:MONOMER-20186"/>
<dbReference type="BRENDA" id="2.7.1.220">
    <property type="organism ID" value="12644"/>
</dbReference>
<dbReference type="Proteomes" id="UP000008550">
    <property type="component" value="Chromosome"/>
</dbReference>
<dbReference type="GO" id="GO:0005524">
    <property type="term" value="F:ATP binding"/>
    <property type="evidence" value="ECO:0007669"/>
    <property type="project" value="UniProtKB-KW"/>
</dbReference>
<dbReference type="GO" id="GO:0016301">
    <property type="term" value="F:kinase activity"/>
    <property type="evidence" value="ECO:0007669"/>
    <property type="project" value="UniProtKB-KW"/>
</dbReference>
<dbReference type="Gene3D" id="3.40.980.20">
    <property type="entry name" value="Four-carbon acid sugar kinase, nucleotide binding domain"/>
    <property type="match status" value="1"/>
</dbReference>
<dbReference type="Gene3D" id="3.40.50.10840">
    <property type="entry name" value="Putative sugar-binding, N-terminal domain"/>
    <property type="match status" value="1"/>
</dbReference>
<dbReference type="InterPro" id="IPR010737">
    <property type="entry name" value="4-carb_acid_sugar_kinase_N"/>
</dbReference>
<dbReference type="InterPro" id="IPR037051">
    <property type="entry name" value="4-carb_acid_sugar_kinase_N_sf"/>
</dbReference>
<dbReference type="InterPro" id="IPR031475">
    <property type="entry name" value="NBD_C"/>
</dbReference>
<dbReference type="InterPro" id="IPR042213">
    <property type="entry name" value="NBD_C_sf"/>
</dbReference>
<dbReference type="Pfam" id="PF17042">
    <property type="entry name" value="NBD_C"/>
    <property type="match status" value="1"/>
</dbReference>
<dbReference type="Pfam" id="PF07005">
    <property type="entry name" value="SBD_N"/>
    <property type="match status" value="1"/>
</dbReference>
<dbReference type="SUPFAM" id="SSF142764">
    <property type="entry name" value="YgbK-like"/>
    <property type="match status" value="1"/>
</dbReference>
<sequence>MSNVVIIADDLTGANATGVLLARKGYKTATFLQLPQDPLENGNRFDVISITTDSRAVAPEEAYRRVAEAARAMLGNKPGLFTKRIDSTLRGNLGPEIDAMLDVLGPDSLAVVVAAFPTSGRITVGGYLLVHSIPLEQTDVARDPKTPVHQTLVADIVAAQSKHSVGFIPLATVLQGSTAVMEALGAQKEAGKRIVVMDAATQKDLDTIAHGAYLSGLSVVAVDPGPFTEALAAYVLPKPKQGRGKKVLMVVGSVTALTRQQLKAVENAYSTCFTTVDVHALIDPWRNAEEIERVSGEVLDHLDDHQVLGVRTVEEAGQVLDLASVALAYMISEEEIASRIADGLAAIARRVLQVSHGEVGGLYTSGGDVTVAVCQALAASGVEVKDEVVPLAAYGRLIGGAFHQTPIITKGGLVGNSDAACTCVDYLLTKISNETYPAE</sequence>
<protein>
    <recommendedName>
        <fullName evidence="3">D-erythronate kinase</fullName>
        <ecNumber evidence="2">2.7.1.220</ecNumber>
    </recommendedName>
</protein>
<evidence type="ECO:0000250" key="1">
    <source>
        <dbReference type="UniProtKB" id="Q0KBC8"/>
    </source>
</evidence>
<evidence type="ECO:0000269" key="2">
    <source>
    </source>
</evidence>
<evidence type="ECO:0000303" key="3">
    <source>
    </source>
</evidence>
<evidence type="ECO:0000305" key="4"/>
<evidence type="ECO:0000312" key="5">
    <source>
        <dbReference type="EMBL" id="ABZ85202.1"/>
    </source>
</evidence>
<feature type="chain" id="PRO_0000439673" description="D-erythronate kinase">
    <location>
        <begin position="1"/>
        <end position="439"/>
    </location>
</feature>
<feature type="binding site" evidence="1">
    <location>
        <position position="253"/>
    </location>
    <ligand>
        <name>ATP</name>
        <dbReference type="ChEBI" id="CHEBI:30616"/>
    </ligand>
</feature>
<feature type="binding site" evidence="1">
    <location>
        <begin position="366"/>
        <end position="369"/>
    </location>
    <ligand>
        <name>ATP</name>
        <dbReference type="ChEBI" id="CHEBI:30616"/>
    </ligand>
</feature>
<feature type="binding site" evidence="1">
    <location>
        <position position="412"/>
    </location>
    <ligand>
        <name>ATP</name>
        <dbReference type="ChEBI" id="CHEBI:30616"/>
    </ligand>
</feature>
<proteinExistence type="evidence at protein level"/>
<accession>B0TBI9</accession>
<organism>
    <name type="scientific">Heliobacterium modesticaldum (strain ATCC 51547 / Ice1)</name>
    <dbReference type="NCBI Taxonomy" id="498761"/>
    <lineage>
        <taxon>Bacteria</taxon>
        <taxon>Bacillati</taxon>
        <taxon>Bacillota</taxon>
        <taxon>Clostridia</taxon>
        <taxon>Eubacteriales</taxon>
        <taxon>Heliobacteriaceae</taxon>
        <taxon>Heliomicrobium</taxon>
    </lineage>
</organism>
<comment type="function">
    <text evidence="2">Catalyzes the ATP-dependent phosphorylation of D-erythronate to D-erythronate 4-phosphate. Can also phosphorylate D-threonate and 4-hydroxy-L-threonine, with lower efficiency.</text>
</comment>
<comment type="catalytic activity">
    <reaction evidence="2">
        <text>D-erythronate + ATP = 4-phospho-D-erythronate + ADP + H(+)</text>
        <dbReference type="Rhea" id="RHEA:52392"/>
        <dbReference type="ChEBI" id="CHEBI:15378"/>
        <dbReference type="ChEBI" id="CHEBI:30616"/>
        <dbReference type="ChEBI" id="CHEBI:58766"/>
        <dbReference type="ChEBI" id="CHEBI:136591"/>
        <dbReference type="ChEBI" id="CHEBI:456216"/>
        <dbReference type="EC" id="2.7.1.220"/>
    </reaction>
</comment>
<comment type="biophysicochemical properties">
    <kinetics>
        <KM evidence="2">0.081 mM for D-erythronate</KM>
        <KM evidence="2">3.2 mM for D-threonate</KM>
        <KM evidence="2">44 mM for 4-hydroxy-L-threonine</KM>
        <text evidence="2">kcat is 16 sec(-1) with D-erythronate as substrate. kcat is 12 sec(-1) with D-threonate as substrate. kcat is 41 sec(-1) with 4-hydroxy-L-threonine as substrate.</text>
    </kinetics>
</comment>
<comment type="similarity">
    <text evidence="4">Belongs to the four-carbon acid sugar kinase family.</text>
</comment>
<reference key="1">
    <citation type="journal article" date="2008" name="J. Bacteriol.">
        <title>The genome of Heliobacterium modesticaldum, a phototrophic representative of the Firmicutes containing the simplest photosynthetic apparatus.</title>
        <authorList>
            <person name="Sattley W.M."/>
            <person name="Madigan M.T."/>
            <person name="Swingley W.D."/>
            <person name="Cheung P.C."/>
            <person name="Clocksin K.M."/>
            <person name="Conrad A.L."/>
            <person name="Dejesa L.C."/>
            <person name="Honchak B.M."/>
            <person name="Jung D.O."/>
            <person name="Karbach L.E."/>
            <person name="Kurdoglu A."/>
            <person name="Lahiri S."/>
            <person name="Mastrian S.D."/>
            <person name="Page L.E."/>
            <person name="Taylor H.L."/>
            <person name="Wang Z.T."/>
            <person name="Raymond J."/>
            <person name="Chen M."/>
            <person name="Blankenship R.E."/>
            <person name="Touchman J.W."/>
        </authorList>
    </citation>
    <scope>NUCLEOTIDE SEQUENCE [LARGE SCALE GENOMIC DNA]</scope>
    <source>
        <strain>ATCC 51547 / Ice1</strain>
    </source>
</reference>
<reference key="2">
    <citation type="journal article" date="2016" name="Proc. Natl. Acad. Sci. U.S.A.">
        <title>Assignment of function to a domain of unknown function: DUF1537 is a new kinase family in catabolic pathways for acid sugars.</title>
        <authorList>
            <person name="Zhang X."/>
            <person name="Carter M.S."/>
            <person name="Vetting M.W."/>
            <person name="San Francisco B."/>
            <person name="Zhao S."/>
            <person name="Al-Obaidi N.F."/>
            <person name="Solbiati J.O."/>
            <person name="Thiaville J.J."/>
            <person name="de Crecy-Lagard V."/>
            <person name="Jacobson M.P."/>
            <person name="Almo S.C."/>
            <person name="Gerlt J.A."/>
        </authorList>
    </citation>
    <scope>FUNCTION</scope>
    <scope>CATALYTIC ACTIVITY</scope>
    <scope>BIOPHYSICOCHEMICAL PROPERTIES</scope>
    <source>
        <strain>ATCC 51547 / Ice1</strain>
    </source>
</reference>
<gene>
    <name evidence="3" type="primary">denK</name>
    <name evidence="4" type="ordered locus">Helmi_25770</name>
    <name evidence="5" type="ORF">HM1_2673</name>
</gene>
<name>DENK_HELMI</name>
<keyword id="KW-0067">ATP-binding</keyword>
<keyword id="KW-0119">Carbohydrate metabolism</keyword>
<keyword id="KW-0418">Kinase</keyword>
<keyword id="KW-0547">Nucleotide-binding</keyword>
<keyword id="KW-1185">Reference proteome</keyword>
<keyword id="KW-0808">Transferase</keyword>